<sequence length="35" mass="3825">GGCLPHNRFCNALSGPRCCSGLKCKELSIWDSRCL</sequence>
<reference key="1">
    <citation type="journal article" date="1990" name="Biomed. Res.">
        <title>Complete amino acid sequence of a new type of neurotoxin from the venom of the spider, Agelena opulenta.</title>
        <authorList>
            <person name="Hagiwara K."/>
            <person name="Sakai T."/>
            <person name="Miwa A."/>
            <person name="Kawai N."/>
            <person name="Nakajima T."/>
        </authorList>
    </citation>
    <scope>PROTEIN SEQUENCE</scope>
    <source>
        <tissue>Venom</tissue>
    </source>
</reference>
<reference key="2">
    <citation type="journal article" date="1991" name="Biomed. Res.">
        <title>Agelenin, a spider neurotoxin: determination of the C-terminus as amide form, and investigation of the disulfide bond arrangement.</title>
        <authorList>
            <person name="Hagiwara K."/>
            <person name="Inui T."/>
            <person name="Nakajima K."/>
            <person name="Kimura T."/>
            <person name="Kitada C."/>
            <person name="Fujino M."/>
            <person name="Sakakibara S."/>
            <person name="Nakajima T."/>
        </authorList>
    </citation>
    <scope>DISULFIDE BONDS</scope>
    <scope>AMIDATION AT LEU-35</scope>
    <source>
        <tissue>Venom</tissue>
    </source>
</reference>
<reference key="3">
    <citation type="journal article" date="1992" name="Pept. Res.">
        <title>Synthesis and disulfide structure determination of agelenin: identification of the carboxy-terminus as an amide form.</title>
        <authorList>
            <person name="Inui T."/>
            <person name="Hagiwara K."/>
            <person name="Nakajima K."/>
            <person name="Kimura T."/>
            <person name="Nakajima T."/>
            <person name="Sakakibara S."/>
        </authorList>
    </citation>
    <scope>SYNTHESIS</scope>
    <scope>DISULFIDE BONDS</scope>
    <scope>AMIDATION AT LEU-35</scope>
    <source>
        <tissue>Venom</tissue>
    </source>
</reference>
<reference key="4">
    <citation type="journal article" date="2007" name="FEBS Lett.">
        <title>Solution structure of agelenin, an insecticidal peptide isolated from the spider Agelena opulenta, and its structural similarities to insect-specific calcium channel inhibitors.</title>
        <authorList>
            <person name="Yamaji N."/>
            <person name="Sugase K."/>
            <person name="Nakajima T."/>
            <person name="Miki T."/>
            <person name="Wakamori M."/>
            <person name="Mori Y."/>
            <person name="Iwashita T."/>
        </authorList>
    </citation>
    <scope>STRUCTURE BY NMR</scope>
    <scope>DISULFIDE BONDS</scope>
    <scope>AMIDATION AT LEU-35</scope>
    <scope>FUNCTION</scope>
    <scope>TOXIC DOSE</scope>
</reference>
<accession>P31328</accession>
<name>TXAG_ALLOP</name>
<feature type="peptide" id="PRO_0000044985" description="U2-agatoxin-Aop1a">
    <location>
        <begin position="1"/>
        <end position="35"/>
    </location>
</feature>
<feature type="site" description="Critical for insecticidal activity" evidence="1">
    <location>
        <position position="9"/>
    </location>
</feature>
<feature type="site" description="Critical for insecticidal activity" evidence="1">
    <location>
        <position position="28"/>
    </location>
</feature>
<feature type="site" description="Critical for insecticidal activity" evidence="1">
    <location>
        <position position="33"/>
    </location>
</feature>
<feature type="modified residue" description="Leucine amide" evidence="2 3 4">
    <location>
        <position position="35"/>
    </location>
</feature>
<feature type="disulfide bond">
    <location>
        <begin position="3"/>
        <end position="19"/>
    </location>
</feature>
<feature type="disulfide bond">
    <location>
        <begin position="10"/>
        <end position="24"/>
    </location>
</feature>
<feature type="disulfide bond">
    <location>
        <begin position="18"/>
        <end position="34"/>
    </location>
</feature>
<feature type="strand" evidence="7">
    <location>
        <begin position="12"/>
        <end position="15"/>
    </location>
</feature>
<feature type="strand" evidence="7">
    <location>
        <begin position="24"/>
        <end position="28"/>
    </location>
</feature>
<feature type="strand" evidence="7">
    <location>
        <begin position="31"/>
        <end position="34"/>
    </location>
</feature>
<evidence type="ECO:0000250" key="1"/>
<evidence type="ECO:0000269" key="2">
    <source>
    </source>
</evidence>
<evidence type="ECO:0000269" key="3">
    <source>
    </source>
</evidence>
<evidence type="ECO:0000269" key="4">
    <source ref="2"/>
</evidence>
<evidence type="ECO:0000305" key="5"/>
<evidence type="ECO:0000305" key="6">
    <source>
    </source>
</evidence>
<evidence type="ECO:0007829" key="7">
    <source>
        <dbReference type="PDB" id="2E2S"/>
    </source>
</evidence>
<comment type="function">
    <text evidence="3">Insect-selective toxin causing rapid but reversible paralysis in crickets. Suppresses the excitatory postsynaptic potentials evoked in lobster neuromuscular synaptic preparations, possibly by blocking the presynaptic calcium channel (Cav). Induces instantaneous reversible paralysis when injected into crickets.</text>
</comment>
<comment type="subcellular location">
    <subcellularLocation>
        <location>Secreted</location>
    </subcellularLocation>
</comment>
<comment type="tissue specificity">
    <text>Expressed by the venom gland.</text>
</comment>
<comment type="domain">
    <text>The presence of a 'disulfide through disulfide knot' structurally defines this protein as a knottin.</text>
</comment>
<comment type="toxic dose">
    <text evidence="3">PD(50) is 291 pmol/g of crickets.</text>
</comment>
<comment type="miscellaneous">
    <text evidence="5">The primary structure of the mature peptide is identical to that of U2-agatoxin-Ao1a (Agelenin) from Agelena orientalis (AC Q5Y4Y5).</text>
</comment>
<comment type="miscellaneous">
    <text evidence="6">Negative results: does not inhibit mammalian Cav2.1/CACNA1A, Cav2.2/CACNA1B and Cav2.3/CACNA1E calcium channels.</text>
</comment>
<comment type="similarity">
    <text>Belongs to the neurotoxin 01 (U2-agtx) family.</text>
</comment>
<proteinExistence type="evidence at protein level"/>
<protein>
    <recommendedName>
        <fullName>U2-agatoxin-Aop1a</fullName>
        <shortName>U2-AGTX-Aop1a</shortName>
    </recommendedName>
    <alternativeName>
        <fullName>Agelenin</fullName>
    </alternativeName>
</protein>
<organism>
    <name type="scientific">Allagelena opulenta</name>
    <name type="common">Funnel weaving spider</name>
    <name type="synonym">Agelena opulenta</name>
    <dbReference type="NCBI Taxonomy" id="29934"/>
    <lineage>
        <taxon>Eukaryota</taxon>
        <taxon>Metazoa</taxon>
        <taxon>Ecdysozoa</taxon>
        <taxon>Arthropoda</taxon>
        <taxon>Chelicerata</taxon>
        <taxon>Arachnida</taxon>
        <taxon>Araneae</taxon>
        <taxon>Araneomorphae</taxon>
        <taxon>Entelegynae</taxon>
        <taxon>Agelenidae</taxon>
        <taxon>Allagelena</taxon>
    </lineage>
</organism>
<keyword id="KW-0002">3D-structure</keyword>
<keyword id="KW-0027">Amidation</keyword>
<keyword id="KW-0108">Calcium channel impairing toxin</keyword>
<keyword id="KW-0903">Direct protein sequencing</keyword>
<keyword id="KW-1015">Disulfide bond</keyword>
<keyword id="KW-0872">Ion channel impairing toxin</keyword>
<keyword id="KW-0960">Knottin</keyword>
<keyword id="KW-0528">Neurotoxin</keyword>
<keyword id="KW-0638">Presynaptic neurotoxin</keyword>
<keyword id="KW-0964">Secreted</keyword>
<keyword id="KW-0800">Toxin</keyword>
<keyword id="KW-1218">Voltage-gated calcium channel impairing toxin</keyword>
<dbReference type="PIR" id="A60959">
    <property type="entry name" value="A60959"/>
</dbReference>
<dbReference type="PDB" id="2E2S">
    <property type="method" value="NMR"/>
    <property type="chains" value="A=1-35"/>
</dbReference>
<dbReference type="PDBsum" id="2E2S"/>
<dbReference type="SMR" id="P31328"/>
<dbReference type="ArachnoServer" id="AS000286">
    <property type="toxin name" value="U2-agatoxin-Aop1a"/>
</dbReference>
<dbReference type="EvolutionaryTrace" id="P31328"/>
<dbReference type="GO" id="GO:0005576">
    <property type="term" value="C:extracellular region"/>
    <property type="evidence" value="ECO:0007669"/>
    <property type="project" value="UniProtKB-SubCell"/>
</dbReference>
<dbReference type="GO" id="GO:0044231">
    <property type="term" value="C:host cell presynaptic membrane"/>
    <property type="evidence" value="ECO:0007669"/>
    <property type="project" value="UniProtKB-KW"/>
</dbReference>
<dbReference type="GO" id="GO:0005246">
    <property type="term" value="F:calcium channel regulator activity"/>
    <property type="evidence" value="ECO:0007669"/>
    <property type="project" value="UniProtKB-KW"/>
</dbReference>
<dbReference type="GO" id="GO:0090729">
    <property type="term" value="F:toxin activity"/>
    <property type="evidence" value="ECO:0007669"/>
    <property type="project" value="UniProtKB-KW"/>
</dbReference>
<dbReference type="Pfam" id="PF05980">
    <property type="entry name" value="Toxin_7"/>
    <property type="match status" value="1"/>
</dbReference>
<dbReference type="SUPFAM" id="SSF57059">
    <property type="entry name" value="omega toxin-like"/>
    <property type="match status" value="1"/>
</dbReference>